<keyword id="KW-0131">Cell cycle</keyword>
<keyword id="KW-0132">Cell division</keyword>
<keyword id="KW-0217">Developmental protein</keyword>
<keyword id="KW-0498">Mitosis</keyword>
<keyword id="KW-0539">Nucleus</keyword>
<keyword id="KW-1185">Reference proteome</keyword>
<protein>
    <recommendedName>
        <fullName>Protein swallow</fullName>
    </recommendedName>
</protein>
<dbReference type="EMBL" id="AF169634">
    <property type="protein sequence ID" value="AAD49350.1"/>
    <property type="status" value="ALT_SEQ"/>
    <property type="molecule type" value="Genomic_DNA"/>
</dbReference>
<dbReference type="EMBL" id="CH379063">
    <property type="protein sequence ID" value="EAL32307.2"/>
    <property type="molecule type" value="Genomic_DNA"/>
</dbReference>
<dbReference type="RefSeq" id="XP_001355250.2">
    <property type="nucleotide sequence ID" value="XM_001355214.3"/>
</dbReference>
<dbReference type="SMR" id="Q9U9I5"/>
<dbReference type="ELM" id="Q9U9I5"/>
<dbReference type="FunCoup" id="Q9U9I5">
    <property type="interactions" value="20"/>
</dbReference>
<dbReference type="STRING" id="46245.Q9U9I5"/>
<dbReference type="EnsemblMetazoa" id="FBtr0274747">
    <property type="protein sequence ID" value="FBpp0273185"/>
    <property type="gene ID" value="FBgn0027807"/>
</dbReference>
<dbReference type="GeneID" id="4815687"/>
<dbReference type="KEGG" id="dpo:4815687"/>
<dbReference type="CTD" id="31580"/>
<dbReference type="eggNOG" id="ENOG502TB8W">
    <property type="taxonomic scope" value="Eukaryota"/>
</dbReference>
<dbReference type="HOGENOM" id="CLU_042201_0_0_1"/>
<dbReference type="InParanoid" id="Q9U9I5"/>
<dbReference type="OMA" id="SSCSYER"/>
<dbReference type="Proteomes" id="UP000001819">
    <property type="component" value="Chromosome X"/>
</dbReference>
<dbReference type="Bgee" id="FBgn0027807">
    <property type="expression patterns" value="Expressed in female reproductive system and 3 other cell types or tissues"/>
</dbReference>
<dbReference type="GO" id="GO:0005634">
    <property type="term" value="C:nucleus"/>
    <property type="evidence" value="ECO:0007669"/>
    <property type="project" value="UniProtKB-SubCell"/>
</dbReference>
<dbReference type="GO" id="GO:0051301">
    <property type="term" value="P:cell division"/>
    <property type="evidence" value="ECO:0007669"/>
    <property type="project" value="UniProtKB-KW"/>
</dbReference>
<dbReference type="Gene3D" id="1.20.5.1000">
    <property type="entry name" value="arf6 gtpase in complex with a specific effector, jip4"/>
    <property type="match status" value="1"/>
</dbReference>
<sequence length="537" mass="59641">MSLEDESFPADELFEQLNSASIGASRQFKSQFGEHDQPEAFERNPAPFLTSDCSDESSFIDAANKSAKTCVSDPVGLDQCEEEEEVDKDFEDSALANGNSELQIKSARSSKSVSYQDIHSAHTKRRYKHVTSKVAKYIADIHAQDQQRRNATKKFQRHSSMPEYLTPTARERGAHFSVDELHNLDESLDNSSAGNITDAKTPNDSYERLLSENERLQNDKEDLKSYSDYLQTKLDEKAMENMQLRRNFDVLRTDLTDCKEKLKRNQSYSLRSLNFCPPASVPKATQTDHELLSHAPNISRLSNMVAIADSGTPLPGSNTNNLTYDSSAGSIEVALLSVAPAARQPNAGKPKKNIQPHSLDFSNDSTEAEPNGNGTTSTGHSSSRAITSRRGAAPNNSESSHPSSNDSAIEVEALDLRSPYHRQPQGSIYPPMQDWGHSDGIYFFDKRNSRVIEVRSINVSQSSNPEQNSGTSETNLLNQSHVQFRHKRTSMGTRMLRLLGPCVRCTDTNQSVNASSATYTIGLPLLREEYGGRHTDR</sequence>
<evidence type="ECO:0000250" key="1"/>
<evidence type="ECO:0000256" key="2">
    <source>
        <dbReference type="SAM" id="MobiDB-lite"/>
    </source>
</evidence>
<evidence type="ECO:0000305" key="3"/>
<organism>
    <name type="scientific">Drosophila pseudoobscura pseudoobscura</name>
    <name type="common">Fruit fly</name>
    <dbReference type="NCBI Taxonomy" id="46245"/>
    <lineage>
        <taxon>Eukaryota</taxon>
        <taxon>Metazoa</taxon>
        <taxon>Ecdysozoa</taxon>
        <taxon>Arthropoda</taxon>
        <taxon>Hexapoda</taxon>
        <taxon>Insecta</taxon>
        <taxon>Pterygota</taxon>
        <taxon>Neoptera</taxon>
        <taxon>Endopterygota</taxon>
        <taxon>Diptera</taxon>
        <taxon>Brachycera</taxon>
        <taxon>Muscomorpha</taxon>
        <taxon>Ephydroidea</taxon>
        <taxon>Drosophilidae</taxon>
        <taxon>Drosophila</taxon>
        <taxon>Sophophora</taxon>
    </lineage>
</organism>
<proteinExistence type="inferred from homology"/>
<comment type="function">
    <text evidence="1">Has a role in localizing bicoid mRNA at the anterior margin of the oocyte during oogenesis, and a poorly characterized role in nuclear divisions in early embryogenesis.</text>
</comment>
<comment type="subunit">
    <text evidence="1">May be constituted of a homo- or heterodimer.</text>
</comment>
<comment type="subcellular location">
    <subcellularLocation>
        <location>Nucleus</location>
    </subcellularLocation>
    <text evidence="1">Uniformly distributed in eggs, becomes localized to the nuclei during early mitotic divisions in early embryogenesis. Swallow enters each nucleus at the beginning of mitosis, occupies a position complementary to that of condensed chromatin, and leaves each nucleus at the end of mitosis (By similarity).</text>
</comment>
<comment type="sequence caution" evidence="3">
    <conflict type="erroneous gene model prediction">
        <sequence resource="EMBL-CDS" id="AAD49350"/>
    </conflict>
</comment>
<name>SWA_DROPS</name>
<reference key="1">
    <citation type="journal article" date="2000" name="Dev. Genes Evol.">
        <title>Analysis of a swallow homologue from Drosophila pseudoobscura.</title>
        <authorList>
            <person name="Huang Z."/>
            <person name="Pokrywka N.J."/>
            <person name="Yoder J.H."/>
            <person name="Stephenson E.C."/>
        </authorList>
    </citation>
    <scope>NUCLEOTIDE SEQUENCE [GENOMIC DNA]</scope>
</reference>
<reference key="2">
    <citation type="journal article" date="2005" name="Genome Res.">
        <title>Comparative genome sequencing of Drosophila pseudoobscura: chromosomal, gene, and cis-element evolution.</title>
        <authorList>
            <person name="Richards S."/>
            <person name="Liu Y."/>
            <person name="Bettencourt B.R."/>
            <person name="Hradecky P."/>
            <person name="Letovsky S."/>
            <person name="Nielsen R."/>
            <person name="Thornton K."/>
            <person name="Hubisz M.J."/>
            <person name="Chen R."/>
            <person name="Meisel R.P."/>
            <person name="Couronne O."/>
            <person name="Hua S."/>
            <person name="Smith M.A."/>
            <person name="Zhang P."/>
            <person name="Liu J."/>
            <person name="Bussemaker H.J."/>
            <person name="van Batenburg M.F."/>
            <person name="Howells S.L."/>
            <person name="Scherer S.E."/>
            <person name="Sodergren E."/>
            <person name="Matthews B.B."/>
            <person name="Crosby M.A."/>
            <person name="Schroeder A.J."/>
            <person name="Ortiz-Barrientos D."/>
            <person name="Rives C.M."/>
            <person name="Metzker M.L."/>
            <person name="Muzny D.M."/>
            <person name="Scott G."/>
            <person name="Steffen D."/>
            <person name="Wheeler D.A."/>
            <person name="Worley K.C."/>
            <person name="Havlak P."/>
            <person name="Durbin K.J."/>
            <person name="Egan A."/>
            <person name="Gill R."/>
            <person name="Hume J."/>
            <person name="Morgan M.B."/>
            <person name="Miner G."/>
            <person name="Hamilton C."/>
            <person name="Huang Y."/>
            <person name="Waldron L."/>
            <person name="Verduzco D."/>
            <person name="Clerc-Blankenburg K.P."/>
            <person name="Dubchak I."/>
            <person name="Noor M.A.F."/>
            <person name="Anderson W."/>
            <person name="White K.P."/>
            <person name="Clark A.G."/>
            <person name="Schaeffer S.W."/>
            <person name="Gelbart W.M."/>
            <person name="Weinstock G.M."/>
            <person name="Gibbs R.A."/>
        </authorList>
    </citation>
    <scope>NUCLEOTIDE SEQUENCE [LARGE SCALE GENOMIC DNA]</scope>
    <source>
        <strain>MV2-25 / Tucson 14011-0121.94</strain>
    </source>
</reference>
<feature type="chain" id="PRO_0000072343" description="Protein swallow">
    <location>
        <begin position="1"/>
        <end position="537"/>
    </location>
</feature>
<feature type="region of interest" description="Disordered" evidence="2">
    <location>
        <begin position="344"/>
        <end position="406"/>
    </location>
</feature>
<feature type="compositionally biased region" description="Low complexity" evidence="2">
    <location>
        <begin position="371"/>
        <end position="383"/>
    </location>
</feature>
<feature type="compositionally biased region" description="Low complexity" evidence="2">
    <location>
        <begin position="392"/>
        <end position="406"/>
    </location>
</feature>
<feature type="sequence conflict" description="In Ref. 1; AAD49350." evidence="3" ref="1">
    <original>P</original>
    <variation>L</variation>
    <location>
        <position position="350"/>
    </location>
</feature>
<feature type="sequence conflict" description="In Ref. 1; AAD49350." evidence="3" ref="1">
    <original>RG</original>
    <variation>A</variation>
    <location>
        <begin position="390"/>
        <end position="391"/>
    </location>
</feature>
<accession>Q9U9I5</accession>
<accession>Q29JJ4</accession>
<gene>
    <name type="primary">swa</name>
    <name type="ORF">GA17446</name>
</gene>